<reference key="1">
    <citation type="journal article" date="2013" name="PLoS ONE">
        <title>SVM-based prediction of propeptide cleavage sites in spider toxins identifies toxin innovation in an australian tarantula.</title>
        <authorList>
            <person name="Wong E.S."/>
            <person name="Hardy M.C."/>
            <person name="Wood D."/>
            <person name="Bailey T."/>
            <person name="King G.F."/>
        </authorList>
    </citation>
    <scope>NUCLEOTIDE SEQUENCE [MRNA]</scope>
    <scope>PARTIAL PROTEIN SEQUENCE</scope>
    <scope>FUNCTION</scope>
</reference>
<organism>
    <name type="scientific">Selenotypus plumipes</name>
    <name type="common">Australian featherleg tarantula</name>
    <dbReference type="NCBI Taxonomy" id="1395661"/>
    <lineage>
        <taxon>Eukaryota</taxon>
        <taxon>Metazoa</taxon>
        <taxon>Ecdysozoa</taxon>
        <taxon>Arthropoda</taxon>
        <taxon>Chelicerata</taxon>
        <taxon>Arachnida</taxon>
        <taxon>Araneae</taxon>
        <taxon>Mygalomorphae</taxon>
        <taxon>Theraphosidae</taxon>
        <taxon>Selenotypus</taxon>
    </lineage>
</organism>
<evidence type="ECO:0000250" key="1"/>
<evidence type="ECO:0000255" key="2"/>
<evidence type="ECO:0000269" key="3">
    <source>
    </source>
</evidence>
<evidence type="ECO:0000303" key="4">
    <source>
    </source>
</evidence>
<evidence type="ECO:0000305" key="5"/>
<accession>P0DM68</accession>
<dbReference type="SMR" id="P0DM68"/>
<dbReference type="ArachnoServer" id="AS001992">
    <property type="toxin name" value="U4-theraphotoxin-Spl1a"/>
</dbReference>
<dbReference type="GO" id="GO:0005576">
    <property type="term" value="C:extracellular region"/>
    <property type="evidence" value="ECO:0007669"/>
    <property type="project" value="UniProtKB-SubCell"/>
</dbReference>
<dbReference type="GO" id="GO:0099106">
    <property type="term" value="F:ion channel regulator activity"/>
    <property type="evidence" value="ECO:0007669"/>
    <property type="project" value="UniProtKB-KW"/>
</dbReference>
<dbReference type="GO" id="GO:0090729">
    <property type="term" value="F:toxin activity"/>
    <property type="evidence" value="ECO:0007669"/>
    <property type="project" value="UniProtKB-KW"/>
</dbReference>
<dbReference type="SUPFAM" id="SSF57059">
    <property type="entry name" value="omega toxin-like"/>
    <property type="match status" value="1"/>
</dbReference>
<feature type="signal peptide" evidence="2">
    <location>
        <begin position="1"/>
        <end position="21"/>
    </location>
</feature>
<feature type="propeptide" id="PRO_0000424398" evidence="4">
    <location>
        <begin position="22"/>
        <end position="50"/>
    </location>
</feature>
<feature type="peptide" id="PRO_0000424399" description="U4-theraphotoxin-Spl1a">
    <location>
        <begin position="51"/>
        <end position="79"/>
    </location>
</feature>
<feature type="modified residue" description="Leucine amide" evidence="1">
    <location>
        <position position="79"/>
    </location>
</feature>
<feature type="disulfide bond" evidence="1">
    <location>
        <begin position="52"/>
        <end position="66"/>
    </location>
</feature>
<feature type="disulfide bond" evidence="1">
    <location>
        <begin position="59"/>
        <end position="71"/>
    </location>
</feature>
<feature type="disulfide bond" evidence="1">
    <location>
        <begin position="65"/>
        <end position="75"/>
    </location>
</feature>
<comment type="function">
    <text evidence="3">Probable ion channel inhibitor. Shows insecticidal activity when injected into mealworms.</text>
</comment>
<comment type="subcellular location">
    <subcellularLocation>
        <location>Secreted</location>
    </subcellularLocation>
</comment>
<comment type="tissue specificity">
    <text>Expressed by the venom gland.</text>
</comment>
<comment type="domain">
    <text evidence="1">The presence of a 'disulfide through disulfide knot' structurally defines this protein as a knottin.</text>
</comment>
<comment type="similarity">
    <text evidence="5">Belongs to the neurotoxin 30 (phrixotoxin) family.</text>
</comment>
<protein>
    <recommendedName>
        <fullName>U4-theraphotoxin-Spl1a</fullName>
        <shortName>U4-TRTX-Spl1a</shortName>
    </recommendedName>
    <alternativeName>
        <fullName>Orally active insecticidal peptide-4</fullName>
        <shortName evidence="4">Toxin OAIP 4</shortName>
    </alternativeName>
</protein>
<sequence>MKASLFAVIFGLVVLCACSFAEDQFASPNELLKSMFVESTHELTPEVEGRYCQKWMWTCDAERKCCEDMACELWCKKRLG</sequence>
<name>TX4_SELPU</name>
<proteinExistence type="evidence at protein level"/>
<keyword id="KW-0027">Amidation</keyword>
<keyword id="KW-0903">Direct protein sequencing</keyword>
<keyword id="KW-1015">Disulfide bond</keyword>
<keyword id="KW-0872">Ion channel impairing toxin</keyword>
<keyword id="KW-0960">Knottin</keyword>
<keyword id="KW-0964">Secreted</keyword>
<keyword id="KW-0732">Signal</keyword>
<keyword id="KW-0800">Toxin</keyword>